<name>MCPI_MELCP</name>
<accession>P82968</accession>
<reference key="1">
    <citation type="submission" date="2001-03" db="UniProtKB">
        <title>Amino acid sequence and kinetic properties of a four-domain proteases inhibitor from the gorgonian Melithaea caledonica.</title>
        <authorList>
            <person name="Peduzzi J."/>
            <person name="Longeon A."/>
            <person name="Guyot M."/>
            <person name="Barthelemy M."/>
        </authorList>
    </citation>
    <scope>PROTEIN SEQUENCE</scope>
    <scope>FUNCTION</scope>
    <scope>VARIANT VAL-195</scope>
</reference>
<organism>
    <name type="scientific">Melithaea caledonica</name>
    <dbReference type="NCBI Taxonomy" id="156534"/>
    <lineage>
        <taxon>Eukaryota</taxon>
        <taxon>Metazoa</taxon>
        <taxon>Cnidaria</taxon>
        <taxon>Anthozoa</taxon>
        <taxon>Octocorallia</taxon>
        <taxon>Malacalcyonacea</taxon>
        <taxon>Melithaeidae</taxon>
        <taxon>Melithaea</taxon>
    </lineage>
</organism>
<comment type="function">
    <text evidence="4">Inhibits trypsin, kallikrein, subtilisin Carlsberg, human leukocyte elastase, porcine pancreatic elastase and chymotrypsin. Two domains are for the inhibition of chymotrypsin.</text>
</comment>
<proteinExistence type="evidence at protein level"/>
<evidence type="ECO:0000250" key="1"/>
<evidence type="ECO:0000255" key="2">
    <source>
        <dbReference type="PROSITE-ProRule" id="PRU00031"/>
    </source>
</evidence>
<evidence type="ECO:0000255" key="3">
    <source>
        <dbReference type="PROSITE-ProRule" id="PRU00798"/>
    </source>
</evidence>
<evidence type="ECO:0000269" key="4">
    <source ref="1"/>
</evidence>
<protein>
    <recommendedName>
        <fullName>Four-domain proteases inhibitor</fullName>
    </recommendedName>
    <alternativeName>
        <fullName>McaPI</fullName>
    </alternativeName>
</protein>
<dbReference type="SMR" id="P82968"/>
<dbReference type="GO" id="GO:0005576">
    <property type="term" value="C:extracellular region"/>
    <property type="evidence" value="ECO:0007669"/>
    <property type="project" value="TreeGrafter"/>
</dbReference>
<dbReference type="GO" id="GO:0004867">
    <property type="term" value="F:serine-type endopeptidase inhibitor activity"/>
    <property type="evidence" value="ECO:0007669"/>
    <property type="project" value="UniProtKB-KW"/>
</dbReference>
<dbReference type="GO" id="GO:0030154">
    <property type="term" value="P:cell differentiation"/>
    <property type="evidence" value="ECO:0007669"/>
    <property type="project" value="TreeGrafter"/>
</dbReference>
<dbReference type="CDD" id="cd00104">
    <property type="entry name" value="KAZAL_FS"/>
    <property type="match status" value="3"/>
</dbReference>
<dbReference type="CDD" id="cd00109">
    <property type="entry name" value="Kunitz-type"/>
    <property type="match status" value="1"/>
</dbReference>
<dbReference type="FunFam" id="4.10.410.10:FF:000021">
    <property type="entry name" value="Serine protease inhibitor, putative"/>
    <property type="match status" value="1"/>
</dbReference>
<dbReference type="Gene3D" id="3.30.60.30">
    <property type="match status" value="3"/>
</dbReference>
<dbReference type="Gene3D" id="4.10.410.10">
    <property type="entry name" value="Pancreatic trypsin inhibitor Kunitz domain"/>
    <property type="match status" value="1"/>
</dbReference>
<dbReference type="InterPro" id="IPR002350">
    <property type="entry name" value="Kazal_dom"/>
</dbReference>
<dbReference type="InterPro" id="IPR036058">
    <property type="entry name" value="Kazal_dom_sf"/>
</dbReference>
<dbReference type="InterPro" id="IPR002223">
    <property type="entry name" value="Kunitz_BPTI"/>
</dbReference>
<dbReference type="InterPro" id="IPR036880">
    <property type="entry name" value="Kunitz_BPTI_sf"/>
</dbReference>
<dbReference type="InterPro" id="IPR050653">
    <property type="entry name" value="Prot_Inhib_GrowthFact_Antg"/>
</dbReference>
<dbReference type="InterPro" id="IPR020901">
    <property type="entry name" value="Prtase_inh_Kunz-CS"/>
</dbReference>
<dbReference type="PANTHER" id="PTHR10913:SF45">
    <property type="entry name" value="FOLLISTATIN, ISOFORM A-RELATED"/>
    <property type="match status" value="1"/>
</dbReference>
<dbReference type="PANTHER" id="PTHR10913">
    <property type="entry name" value="FOLLISTATIN-RELATED"/>
    <property type="match status" value="1"/>
</dbReference>
<dbReference type="Pfam" id="PF00050">
    <property type="entry name" value="Kazal_1"/>
    <property type="match status" value="2"/>
</dbReference>
<dbReference type="Pfam" id="PF07648">
    <property type="entry name" value="Kazal_2"/>
    <property type="match status" value="1"/>
</dbReference>
<dbReference type="Pfam" id="PF00014">
    <property type="entry name" value="Kunitz_BPTI"/>
    <property type="match status" value="1"/>
</dbReference>
<dbReference type="PRINTS" id="PR00759">
    <property type="entry name" value="BASICPTASE"/>
</dbReference>
<dbReference type="SMART" id="SM00280">
    <property type="entry name" value="KAZAL"/>
    <property type="match status" value="3"/>
</dbReference>
<dbReference type="SMART" id="SM00131">
    <property type="entry name" value="KU"/>
    <property type="match status" value="1"/>
</dbReference>
<dbReference type="SUPFAM" id="SSF57362">
    <property type="entry name" value="BPTI-like"/>
    <property type="match status" value="1"/>
</dbReference>
<dbReference type="SUPFAM" id="SSF100895">
    <property type="entry name" value="Kazal-type serine protease inhibitors"/>
    <property type="match status" value="3"/>
</dbReference>
<dbReference type="PROSITE" id="PS00280">
    <property type="entry name" value="BPTI_KUNITZ_1"/>
    <property type="match status" value="1"/>
</dbReference>
<dbReference type="PROSITE" id="PS50279">
    <property type="entry name" value="BPTI_KUNITZ_2"/>
    <property type="match status" value="1"/>
</dbReference>
<dbReference type="PROSITE" id="PS51465">
    <property type="entry name" value="KAZAL_2"/>
    <property type="match status" value="3"/>
</dbReference>
<sequence length="197" mass="21248">CDLACSLIYAPVCGSDGKTYPSECSMEATACIDEVVITKVHDGPCETKCSAACTKEYNPQCGTDGVTYANPCTLEYAKCKSDGEITFDHAGPCKPKCPTVCTLEYNPQCGTDGRTYGNPCQLKVAECESDGRITLDHPGECDACSLKKVVGPCRGAFRRYYFDSVSGKCEEFVYGGCGGNDNNFKTLDACQKRCMEE</sequence>
<keyword id="KW-0903">Direct protein sequencing</keyword>
<keyword id="KW-1015">Disulfide bond</keyword>
<keyword id="KW-0646">Protease inhibitor</keyword>
<keyword id="KW-0677">Repeat</keyword>
<keyword id="KW-0722">Serine protease inhibitor</keyword>
<feature type="chain" id="PRO_0000073197" description="Four-domain proteases inhibitor">
    <location>
        <begin position="1"/>
        <end position="197"/>
    </location>
</feature>
<feature type="domain" description="Kazal-like 1" evidence="3">
    <location>
        <begin position="1"/>
        <end position="47"/>
    </location>
</feature>
<feature type="domain" description="Kazal-like 2" evidence="3">
    <location>
        <begin position="48"/>
        <end position="95"/>
    </location>
</feature>
<feature type="domain" description="Kazal-like 3" evidence="3">
    <location>
        <begin position="96"/>
        <end position="143"/>
    </location>
</feature>
<feature type="domain" description="BPTI/Kunitz inhibitor" evidence="2">
    <location>
        <begin position="144"/>
        <end position="194"/>
    </location>
</feature>
<feature type="site" description="Reactive bond 1" evidence="3">
    <location>
        <begin position="7"/>
        <end position="8"/>
    </location>
</feature>
<feature type="site" description="Reactive bond 2" evidence="3">
    <location>
        <begin position="55"/>
        <end position="56"/>
    </location>
</feature>
<feature type="site" description="Reactive bond 3" evidence="3">
    <location>
        <begin position="103"/>
        <end position="104"/>
    </location>
</feature>
<feature type="site" description="Reactive bond 4" evidence="3">
    <location>
        <begin position="154"/>
        <end position="155"/>
    </location>
</feature>
<feature type="disulfide bond" evidence="1">
    <location>
        <begin position="1"/>
        <end position="31"/>
    </location>
</feature>
<feature type="disulfide bond" evidence="1">
    <location>
        <begin position="5"/>
        <end position="24"/>
    </location>
</feature>
<feature type="disulfide bond" evidence="1">
    <location>
        <begin position="13"/>
        <end position="45"/>
    </location>
</feature>
<feature type="disulfide bond" evidence="1">
    <location>
        <begin position="49"/>
        <end position="79"/>
    </location>
</feature>
<feature type="disulfide bond" evidence="1">
    <location>
        <begin position="53"/>
        <end position="72"/>
    </location>
</feature>
<feature type="disulfide bond" evidence="1">
    <location>
        <begin position="61"/>
        <end position="93"/>
    </location>
</feature>
<feature type="disulfide bond" evidence="1">
    <location>
        <begin position="97"/>
        <end position="127"/>
    </location>
</feature>
<feature type="disulfide bond" evidence="1">
    <location>
        <begin position="101"/>
        <end position="120"/>
    </location>
</feature>
<feature type="disulfide bond" evidence="1">
    <location>
        <begin position="109"/>
        <end position="141"/>
    </location>
</feature>
<feature type="disulfide bond" evidence="1">
    <location>
        <begin position="144"/>
        <end position="194"/>
    </location>
</feature>
<feature type="disulfide bond" evidence="1">
    <location>
        <begin position="153"/>
        <end position="177"/>
    </location>
</feature>
<feature type="disulfide bond" evidence="1">
    <location>
        <begin position="169"/>
        <end position="190"/>
    </location>
</feature>
<feature type="sequence variant" evidence="4">
    <original>M</original>
    <variation>V</variation>
    <location>
        <position position="195"/>
    </location>
</feature>